<name>URK_BORBZ</name>
<proteinExistence type="inferred from homology"/>
<protein>
    <recommendedName>
        <fullName evidence="1">Uridine kinase</fullName>
        <ecNumber evidence="1">2.7.1.48</ecNumber>
    </recommendedName>
    <alternativeName>
        <fullName evidence="1">Cytidine monophosphokinase</fullName>
    </alternativeName>
    <alternativeName>
        <fullName evidence="1">Uridine monophosphokinase</fullName>
    </alternativeName>
</protein>
<evidence type="ECO:0000255" key="1">
    <source>
        <dbReference type="HAMAP-Rule" id="MF_00551"/>
    </source>
</evidence>
<reference key="1">
    <citation type="journal article" date="2011" name="J. Bacteriol.">
        <title>Whole-genome sequences of thirteen isolates of Borrelia burgdorferi.</title>
        <authorList>
            <person name="Schutzer S.E."/>
            <person name="Fraser-Liggett C.M."/>
            <person name="Casjens S.R."/>
            <person name="Qiu W.G."/>
            <person name="Dunn J.J."/>
            <person name="Mongodin E.F."/>
            <person name="Luft B.J."/>
        </authorList>
    </citation>
    <scope>NUCLEOTIDE SEQUENCE [LARGE SCALE GENOMIC DNA]</scope>
    <source>
        <strain>ZS7</strain>
    </source>
</reference>
<sequence length="206" mass="23874">MAKIIGISGGSGSGKTTVVSKISEFIPEFVLISQDNYYKSVGDYEHEFSKVNFDHPDAFDNNLFYEHLKNLKKNSPIDMPLYDFINHKRQLKTVLVVPTPVVIVEGIMIFVEERVRNLIDLKIYIDTPNDIRFIRRLRRDISKRGRTVESVIDQYLNTTRWGYYRFIEPTKEYADLIIPEGGHNDKALYVLSTFLKSLSKEGLDFT</sequence>
<accession>B7J0V4</accession>
<dbReference type="EC" id="2.7.1.48" evidence="1"/>
<dbReference type="EMBL" id="CP001205">
    <property type="protein sequence ID" value="ACK74442.1"/>
    <property type="molecule type" value="Genomic_DNA"/>
</dbReference>
<dbReference type="RefSeq" id="WP_002655979.1">
    <property type="nucleotide sequence ID" value="NC_011728.1"/>
</dbReference>
<dbReference type="SMR" id="B7J0V4"/>
<dbReference type="GeneID" id="56568200"/>
<dbReference type="KEGG" id="bbz:BbuZS7_0015"/>
<dbReference type="HOGENOM" id="CLU_021278_1_2_12"/>
<dbReference type="UniPathway" id="UPA00574">
    <property type="reaction ID" value="UER00637"/>
</dbReference>
<dbReference type="UniPathway" id="UPA00579">
    <property type="reaction ID" value="UER00640"/>
</dbReference>
<dbReference type="Proteomes" id="UP000006901">
    <property type="component" value="Chromosome"/>
</dbReference>
<dbReference type="GO" id="GO:0005737">
    <property type="term" value="C:cytoplasm"/>
    <property type="evidence" value="ECO:0007669"/>
    <property type="project" value="UniProtKB-SubCell"/>
</dbReference>
<dbReference type="GO" id="GO:0005524">
    <property type="term" value="F:ATP binding"/>
    <property type="evidence" value="ECO:0007669"/>
    <property type="project" value="UniProtKB-UniRule"/>
</dbReference>
<dbReference type="GO" id="GO:0043771">
    <property type="term" value="F:cytidine kinase activity"/>
    <property type="evidence" value="ECO:0007669"/>
    <property type="project" value="RHEA"/>
</dbReference>
<dbReference type="GO" id="GO:0004849">
    <property type="term" value="F:uridine kinase activity"/>
    <property type="evidence" value="ECO:0007669"/>
    <property type="project" value="UniProtKB-UniRule"/>
</dbReference>
<dbReference type="GO" id="GO:0044211">
    <property type="term" value="P:CTP salvage"/>
    <property type="evidence" value="ECO:0007669"/>
    <property type="project" value="UniProtKB-UniRule"/>
</dbReference>
<dbReference type="GO" id="GO:0044206">
    <property type="term" value="P:UMP salvage"/>
    <property type="evidence" value="ECO:0007669"/>
    <property type="project" value="UniProtKB-UniRule"/>
</dbReference>
<dbReference type="CDD" id="cd02023">
    <property type="entry name" value="UMPK"/>
    <property type="match status" value="1"/>
</dbReference>
<dbReference type="Gene3D" id="3.40.50.300">
    <property type="entry name" value="P-loop containing nucleotide triphosphate hydrolases"/>
    <property type="match status" value="1"/>
</dbReference>
<dbReference type="HAMAP" id="MF_00551">
    <property type="entry name" value="Uridine_kinase"/>
    <property type="match status" value="1"/>
</dbReference>
<dbReference type="InterPro" id="IPR027417">
    <property type="entry name" value="P-loop_NTPase"/>
</dbReference>
<dbReference type="InterPro" id="IPR006083">
    <property type="entry name" value="PRK/URK"/>
</dbReference>
<dbReference type="InterPro" id="IPR026008">
    <property type="entry name" value="Uridine_kinase"/>
</dbReference>
<dbReference type="InterPro" id="IPR000764">
    <property type="entry name" value="Uridine_kinase-like"/>
</dbReference>
<dbReference type="NCBIfam" id="NF004018">
    <property type="entry name" value="PRK05480.1"/>
    <property type="match status" value="1"/>
</dbReference>
<dbReference type="NCBIfam" id="TIGR00235">
    <property type="entry name" value="udk"/>
    <property type="match status" value="1"/>
</dbReference>
<dbReference type="PANTHER" id="PTHR10285">
    <property type="entry name" value="URIDINE KINASE"/>
    <property type="match status" value="1"/>
</dbReference>
<dbReference type="Pfam" id="PF00485">
    <property type="entry name" value="PRK"/>
    <property type="match status" value="1"/>
</dbReference>
<dbReference type="PRINTS" id="PR00988">
    <property type="entry name" value="URIDINKINASE"/>
</dbReference>
<dbReference type="SUPFAM" id="SSF52540">
    <property type="entry name" value="P-loop containing nucleoside triphosphate hydrolases"/>
    <property type="match status" value="1"/>
</dbReference>
<gene>
    <name evidence="1" type="primary">udk</name>
    <name type="ordered locus">BbuZS7_0015</name>
</gene>
<feature type="chain" id="PRO_1000129069" description="Uridine kinase">
    <location>
        <begin position="1"/>
        <end position="206"/>
    </location>
</feature>
<feature type="binding site" evidence="1">
    <location>
        <begin position="9"/>
        <end position="16"/>
    </location>
    <ligand>
        <name>ATP</name>
        <dbReference type="ChEBI" id="CHEBI:30616"/>
    </ligand>
</feature>
<comment type="catalytic activity">
    <reaction evidence="1">
        <text>uridine + ATP = UMP + ADP + H(+)</text>
        <dbReference type="Rhea" id="RHEA:16825"/>
        <dbReference type="ChEBI" id="CHEBI:15378"/>
        <dbReference type="ChEBI" id="CHEBI:16704"/>
        <dbReference type="ChEBI" id="CHEBI:30616"/>
        <dbReference type="ChEBI" id="CHEBI:57865"/>
        <dbReference type="ChEBI" id="CHEBI:456216"/>
        <dbReference type="EC" id="2.7.1.48"/>
    </reaction>
</comment>
<comment type="catalytic activity">
    <reaction evidence="1">
        <text>cytidine + ATP = CMP + ADP + H(+)</text>
        <dbReference type="Rhea" id="RHEA:24674"/>
        <dbReference type="ChEBI" id="CHEBI:15378"/>
        <dbReference type="ChEBI" id="CHEBI:17562"/>
        <dbReference type="ChEBI" id="CHEBI:30616"/>
        <dbReference type="ChEBI" id="CHEBI:60377"/>
        <dbReference type="ChEBI" id="CHEBI:456216"/>
        <dbReference type="EC" id="2.7.1.48"/>
    </reaction>
</comment>
<comment type="pathway">
    <text evidence="1">Pyrimidine metabolism; CTP biosynthesis via salvage pathway; CTP from cytidine: step 1/3.</text>
</comment>
<comment type="pathway">
    <text evidence="1">Pyrimidine metabolism; UMP biosynthesis via salvage pathway; UMP from uridine: step 1/1.</text>
</comment>
<comment type="subcellular location">
    <subcellularLocation>
        <location evidence="1">Cytoplasm</location>
    </subcellularLocation>
</comment>
<comment type="similarity">
    <text evidence="1">Belongs to the uridine kinase family.</text>
</comment>
<keyword id="KW-0067">ATP-binding</keyword>
<keyword id="KW-0963">Cytoplasm</keyword>
<keyword id="KW-0418">Kinase</keyword>
<keyword id="KW-0547">Nucleotide-binding</keyword>
<keyword id="KW-0808">Transferase</keyword>
<organism>
    <name type="scientific">Borreliella burgdorferi (strain ZS7)</name>
    <name type="common">Borrelia burgdorferi</name>
    <dbReference type="NCBI Taxonomy" id="445985"/>
    <lineage>
        <taxon>Bacteria</taxon>
        <taxon>Pseudomonadati</taxon>
        <taxon>Spirochaetota</taxon>
        <taxon>Spirochaetia</taxon>
        <taxon>Spirochaetales</taxon>
        <taxon>Borreliaceae</taxon>
        <taxon>Borreliella</taxon>
    </lineage>
</organism>